<sequence length="163" mass="18098">MVFVKTLHRTLFLEVAANEDVLSIKQKIEAAEGIPAEEQRLCYAGRQLEDSDCGIDSEATIYVNLELLGGAKKRKKKVYTTPKKNKRKPKKVKLAVLKYYKIDENGKITRLRKECQQPSCGGGVFMAQHANRHYCGRCHDTLVVDTATAAATSGEKGGKKGKK</sequence>
<gene>
    <name evidence="3" type="primary">rps-27A</name>
    <name evidence="3" type="synonym">ubl-1</name>
    <name evidence="3" type="ORF">H06I04.4</name>
</gene>
<organism>
    <name type="scientific">Caenorhabditis elegans</name>
    <dbReference type="NCBI Taxonomy" id="6239"/>
    <lineage>
        <taxon>Eukaryota</taxon>
        <taxon>Metazoa</taxon>
        <taxon>Ecdysozoa</taxon>
        <taxon>Nematoda</taxon>
        <taxon>Chromadorea</taxon>
        <taxon>Rhabditida</taxon>
        <taxon>Rhabditina</taxon>
        <taxon>Rhabditomorpha</taxon>
        <taxon>Rhabditoidea</taxon>
        <taxon>Rhabditidae</taxon>
        <taxon>Peloderinae</taxon>
        <taxon>Caenorhabditis</taxon>
    </lineage>
</organism>
<reference key="1">
    <citation type="journal article" date="1993" name="J. Biol. Chem.">
        <title>Novel ubiquitin-like ribosomal protein fusion genes from the nematodes Caenorhabditis elegans and Caenorhabditis briggsae.</title>
        <authorList>
            <person name="Jones D."/>
            <person name="Candido E.P.M."/>
        </authorList>
    </citation>
    <scope>NUCLEOTIDE SEQUENCE [MRNA] (ISOFORM A)</scope>
</reference>
<reference key="2">
    <citation type="journal article" date="1998" name="Science">
        <title>Genome sequence of the nematode C. elegans: a platform for investigating biology.</title>
        <authorList>
            <consortium name="The C. elegans sequencing consortium"/>
        </authorList>
    </citation>
    <scope>NUCLEOTIDE SEQUENCE [LARGE SCALE GENOMIC DNA]</scope>
    <scope>ALTERNATIVE SPLICING</scope>
    <source>
        <strain>Bristol N2</strain>
    </source>
</reference>
<keyword id="KW-0002">3D-structure</keyword>
<keyword id="KW-0025">Alternative splicing</keyword>
<keyword id="KW-1017">Isopeptide bond</keyword>
<keyword id="KW-0479">Metal-binding</keyword>
<keyword id="KW-1185">Reference proteome</keyword>
<keyword id="KW-0687">Ribonucleoprotein</keyword>
<keyword id="KW-0689">Ribosomal protein</keyword>
<keyword id="KW-0862">Zinc</keyword>
<keyword id="KW-0863">Zinc-finger</keyword>
<protein>
    <recommendedName>
        <fullName evidence="2">Ubiquitin-like protein 1-ribosomal protein eS31 fusion protein</fullName>
    </recommendedName>
    <component>
        <recommendedName>
            <fullName>Ubiquitin-like protein 1</fullName>
        </recommendedName>
    </component>
    <component>
        <recommendedName>
            <fullName evidence="2">Small ribosomal subunit protein eS31</fullName>
        </recommendedName>
        <alternativeName>
            <fullName>40S ribosomal protein S27a</fullName>
        </alternativeName>
    </component>
</protein>
<evidence type="ECO:0000255" key="1">
    <source>
        <dbReference type="PROSITE-ProRule" id="PRU00214"/>
    </source>
</evidence>
<evidence type="ECO:0000305" key="2"/>
<evidence type="ECO:0000312" key="3">
    <source>
        <dbReference type="WormBase" id="H06I04.4a"/>
    </source>
</evidence>
<proteinExistence type="evidence at protein level"/>
<name>RS27A_CAEEL</name>
<accession>P37165</accession>
<accession>Q07372</accession>
<accession>Q8MXV5</accession>
<accession>Q9N5P1</accession>
<dbReference type="EMBL" id="L16530">
    <property type="protein sequence ID" value="AAA28161.1"/>
    <property type="molecule type" value="mRNA"/>
</dbReference>
<dbReference type="EMBL" id="FO081532">
    <property type="protein sequence ID" value="CCD72254.1"/>
    <property type="molecule type" value="Genomic_DNA"/>
</dbReference>
<dbReference type="EMBL" id="FO081532">
    <property type="protein sequence ID" value="CCD72255.1"/>
    <property type="molecule type" value="Genomic_DNA"/>
</dbReference>
<dbReference type="PIR" id="A48766">
    <property type="entry name" value="A48766"/>
</dbReference>
<dbReference type="RefSeq" id="NP_001022637.1">
    <molecule id="P37165-2"/>
    <property type="nucleotide sequence ID" value="NM_001027466.5"/>
</dbReference>
<dbReference type="RefSeq" id="NP_741102.1">
    <molecule id="P37165-1"/>
    <property type="nucleotide sequence ID" value="NM_171089.8"/>
</dbReference>
<dbReference type="PDB" id="9BH5">
    <property type="method" value="EM"/>
    <property type="resolution" value="2.63 A"/>
    <property type="chains" value="Af=1-163"/>
</dbReference>
<dbReference type="PDB" id="9CAI">
    <property type="method" value="EM"/>
    <property type="resolution" value="2.59 A"/>
    <property type="chains" value="Af=1-163"/>
</dbReference>
<dbReference type="PDBsum" id="9BH5"/>
<dbReference type="PDBsum" id="9CAI"/>
<dbReference type="EMDB" id="EMD-44533"/>
<dbReference type="EMDB" id="EMD-45392"/>
<dbReference type="SMR" id="P37165"/>
<dbReference type="BioGRID" id="40658">
    <property type="interactions" value="87"/>
</dbReference>
<dbReference type="DIP" id="DIP-26542N"/>
<dbReference type="FunCoup" id="P37165">
    <property type="interactions" value="1990"/>
</dbReference>
<dbReference type="IntAct" id="P37165">
    <property type="interactions" value="2"/>
</dbReference>
<dbReference type="STRING" id="6239.H06I04.4a.3"/>
<dbReference type="PaxDb" id="6239-H06I04.4a.2"/>
<dbReference type="PeptideAtlas" id="P37165"/>
<dbReference type="EnsemblMetazoa" id="H06I04.4a.1">
    <molecule id="P37165-1"/>
    <property type="protein sequence ID" value="H06I04.4a.1"/>
    <property type="gene ID" value="WBGene00006725"/>
</dbReference>
<dbReference type="EnsemblMetazoa" id="H06I04.4a.2">
    <molecule id="P37165-1"/>
    <property type="protein sequence ID" value="H06I04.4a.2"/>
    <property type="gene ID" value="WBGene00006725"/>
</dbReference>
<dbReference type="EnsemblMetazoa" id="H06I04.4b.1">
    <molecule id="P37165-2"/>
    <property type="protein sequence ID" value="H06I04.4b.1"/>
    <property type="gene ID" value="WBGene00006725"/>
</dbReference>
<dbReference type="GeneID" id="175413"/>
<dbReference type="KEGG" id="cel:CELE_H06I04.4"/>
<dbReference type="UCSC" id="H06I04.4a.1">
    <property type="organism name" value="c. elegans"/>
</dbReference>
<dbReference type="AGR" id="WB:WBGene00006725"/>
<dbReference type="CTD" id="175413"/>
<dbReference type="WormBase" id="H06I04.4a">
    <molecule id="P37165-1"/>
    <property type="protein sequence ID" value="CE20938"/>
    <property type="gene ID" value="WBGene00006725"/>
    <property type="gene designation" value="rps-27A"/>
</dbReference>
<dbReference type="WormBase" id="H06I04.4b">
    <molecule id="P37165-2"/>
    <property type="protein sequence ID" value="CE31022"/>
    <property type="gene ID" value="WBGene00006725"/>
    <property type="gene designation" value="rps-27A"/>
</dbReference>
<dbReference type="eggNOG" id="KOG0004">
    <property type="taxonomic scope" value="Eukaryota"/>
</dbReference>
<dbReference type="HOGENOM" id="CLU_010412_2_0_1"/>
<dbReference type="InParanoid" id="P37165"/>
<dbReference type="OMA" id="HANRHYC"/>
<dbReference type="OrthoDB" id="428577at2759"/>
<dbReference type="PhylomeDB" id="P37165"/>
<dbReference type="Reactome" id="R-CEL-110312">
    <property type="pathway name" value="Translesion synthesis by REV1"/>
</dbReference>
<dbReference type="Reactome" id="R-CEL-110314">
    <property type="pathway name" value="Recognition of DNA damage by PCNA-containing replication complex"/>
</dbReference>
<dbReference type="Reactome" id="R-CEL-110320">
    <property type="pathway name" value="Translesion Synthesis by POLH"/>
</dbReference>
<dbReference type="Reactome" id="R-CEL-1234176">
    <property type="pathway name" value="Oxygen-dependent proline hydroxylation of Hypoxia-inducible Factor Alpha"/>
</dbReference>
<dbReference type="Reactome" id="R-CEL-1253288">
    <property type="pathway name" value="Downregulation of ERBB4 signaling"/>
</dbReference>
<dbReference type="Reactome" id="R-CEL-156827">
    <property type="pathway name" value="L13a-mediated translational silencing of Ceruloplasmin expression"/>
</dbReference>
<dbReference type="Reactome" id="R-CEL-1799339">
    <property type="pathway name" value="SRP-dependent cotranslational protein targeting to membrane"/>
</dbReference>
<dbReference type="Reactome" id="R-CEL-182971">
    <property type="pathway name" value="EGFR downregulation"/>
</dbReference>
<dbReference type="Reactome" id="R-CEL-187577">
    <property type="pathway name" value="SCF(Skp2)-mediated degradation of p27/p21"/>
</dbReference>
<dbReference type="Reactome" id="R-CEL-195253">
    <property type="pathway name" value="Degradation of beta-catenin by the destruction complex"/>
</dbReference>
<dbReference type="Reactome" id="R-CEL-2173788">
    <property type="pathway name" value="Downregulation of TGF-beta receptor signaling"/>
</dbReference>
<dbReference type="Reactome" id="R-CEL-2173791">
    <property type="pathway name" value="TGF-beta receptor signaling in EMT (epithelial to mesenchymal transition)"/>
</dbReference>
<dbReference type="Reactome" id="R-CEL-2173795">
    <property type="pathway name" value="Downregulation of SMAD2/3:SMAD4 transcriptional activity"/>
</dbReference>
<dbReference type="Reactome" id="R-CEL-2173796">
    <property type="pathway name" value="SMAD2/SMAD3:SMAD4 heterotrimer regulates transcription"/>
</dbReference>
<dbReference type="Reactome" id="R-CEL-2565942">
    <property type="pathway name" value="Regulation of PLK1 Activity at G2/M Transition"/>
</dbReference>
<dbReference type="Reactome" id="R-CEL-2672351">
    <property type="pathway name" value="Stimuli-sensing channels"/>
</dbReference>
<dbReference type="Reactome" id="R-CEL-3134975">
    <property type="pathway name" value="Regulation of innate immune responses to cytosolic DNA"/>
</dbReference>
<dbReference type="Reactome" id="R-CEL-349425">
    <property type="pathway name" value="Autodegradation of the E3 ubiquitin ligase COP1"/>
</dbReference>
<dbReference type="Reactome" id="R-CEL-382556">
    <property type="pathway name" value="ABC-family proteins mediated transport"/>
</dbReference>
<dbReference type="Reactome" id="R-CEL-4641258">
    <property type="pathway name" value="Degradation of DVL"/>
</dbReference>
<dbReference type="Reactome" id="R-CEL-4641263">
    <property type="pathway name" value="Regulation of FZD by ubiquitination"/>
</dbReference>
<dbReference type="Reactome" id="R-CEL-532668">
    <property type="pathway name" value="N-glycan trimming in the ER and Calnexin/Calreticulin cycle"/>
</dbReference>
<dbReference type="Reactome" id="R-CEL-5357905">
    <property type="pathway name" value="Regulation of TNFR1 signaling"/>
</dbReference>
<dbReference type="Reactome" id="R-CEL-5358346">
    <property type="pathway name" value="Hedgehog ligand biogenesis"/>
</dbReference>
<dbReference type="Reactome" id="R-CEL-5632684">
    <property type="pathway name" value="Hedgehog 'on' state"/>
</dbReference>
<dbReference type="Reactome" id="R-CEL-5655862">
    <property type="pathway name" value="Translesion synthesis by POLK"/>
</dbReference>
<dbReference type="Reactome" id="R-CEL-5656121">
    <property type="pathway name" value="Translesion synthesis by POLI"/>
</dbReference>
<dbReference type="Reactome" id="R-CEL-5675221">
    <property type="pathway name" value="Negative regulation of MAPK pathway"/>
</dbReference>
<dbReference type="Reactome" id="R-CEL-5687128">
    <property type="pathway name" value="MAPK6/MAPK4 signaling"/>
</dbReference>
<dbReference type="Reactome" id="R-CEL-5689603">
    <property type="pathway name" value="UCH proteinases"/>
</dbReference>
<dbReference type="Reactome" id="R-CEL-5689877">
    <property type="pathway name" value="Josephin domain DUBs"/>
</dbReference>
<dbReference type="Reactome" id="R-CEL-5689880">
    <property type="pathway name" value="Ub-specific processing proteases"/>
</dbReference>
<dbReference type="Reactome" id="R-CEL-5689896">
    <property type="pathway name" value="Ovarian tumor domain proteases"/>
</dbReference>
<dbReference type="Reactome" id="R-CEL-5689901">
    <property type="pathway name" value="Metalloprotease DUBs"/>
</dbReference>
<dbReference type="Reactome" id="R-CEL-5696394">
    <property type="pathway name" value="DNA Damage Recognition in GG-NER"/>
</dbReference>
<dbReference type="Reactome" id="R-CEL-5696395">
    <property type="pathway name" value="Formation of Incision Complex in GG-NER"/>
</dbReference>
<dbReference type="Reactome" id="R-CEL-5696397">
    <property type="pathway name" value="Gap-filling DNA repair synthesis and ligation in GG-NER"/>
</dbReference>
<dbReference type="Reactome" id="R-CEL-5696400">
    <property type="pathway name" value="Dual Incision in GG-NER"/>
</dbReference>
<dbReference type="Reactome" id="R-CEL-6781823">
    <property type="pathway name" value="Formation of TC-NER Pre-Incision Complex"/>
</dbReference>
<dbReference type="Reactome" id="R-CEL-6782135">
    <property type="pathway name" value="Dual incision in TC-NER"/>
</dbReference>
<dbReference type="Reactome" id="R-CEL-6782210">
    <property type="pathway name" value="Gap-filling DNA repair synthesis and ligation in TC-NER"/>
</dbReference>
<dbReference type="Reactome" id="R-CEL-6807004">
    <property type="pathway name" value="Negative regulation of MET activity"/>
</dbReference>
<dbReference type="Reactome" id="R-CEL-68949">
    <property type="pathway name" value="Orc1 removal from chromatin"/>
</dbReference>
<dbReference type="Reactome" id="R-CEL-69017">
    <property type="pathway name" value="CDK-mediated phosphorylation and removal of Cdc6"/>
</dbReference>
<dbReference type="Reactome" id="R-CEL-69231">
    <property type="pathway name" value="Cyclin D associated events in G1"/>
</dbReference>
<dbReference type="Reactome" id="R-CEL-69601">
    <property type="pathway name" value="Ubiquitin Mediated Degradation of Phosphorylated Cdc25A"/>
</dbReference>
<dbReference type="Reactome" id="R-CEL-72689">
    <property type="pathway name" value="Formation of a pool of free 40S subunits"/>
</dbReference>
<dbReference type="Reactome" id="R-CEL-72706">
    <property type="pathway name" value="GTP hydrolysis and joining of the 60S ribosomal subunit"/>
</dbReference>
<dbReference type="Reactome" id="R-CEL-75815">
    <property type="pathway name" value="Ubiquitin-dependent degradation of Cyclin D"/>
</dbReference>
<dbReference type="Reactome" id="R-CEL-8849469">
    <property type="pathway name" value="PTK6 Regulates RTKs and Their Effectors AKT1 and DOK1"/>
</dbReference>
<dbReference type="Reactome" id="R-CEL-8854050">
    <property type="pathway name" value="FBXL7 down-regulates AURKA during mitotic entry and in early mitosis"/>
</dbReference>
<dbReference type="Reactome" id="R-CEL-8856825">
    <property type="pathway name" value="Cargo recognition for clathrin-mediated endocytosis"/>
</dbReference>
<dbReference type="Reactome" id="R-CEL-8856828">
    <property type="pathway name" value="Clathrin-mediated endocytosis"/>
</dbReference>
<dbReference type="Reactome" id="R-CEL-8863795">
    <property type="pathway name" value="Downregulation of ERBB2 signaling"/>
</dbReference>
<dbReference type="Reactome" id="R-CEL-8866652">
    <property type="pathway name" value="Synthesis of active ubiquitin: roles of E1 and E2 enzymes"/>
</dbReference>
<dbReference type="Reactome" id="R-CEL-8866654">
    <property type="pathway name" value="E3 ubiquitin ligases ubiquitinate target proteins"/>
</dbReference>
<dbReference type="Reactome" id="R-CEL-8939902">
    <property type="pathway name" value="Regulation of RUNX2 expression and activity"/>
</dbReference>
<dbReference type="Reactome" id="R-CEL-8941858">
    <property type="pathway name" value="Regulation of RUNX3 expression and activity"/>
</dbReference>
<dbReference type="Reactome" id="R-CEL-8948747">
    <property type="pathway name" value="Regulation of PTEN localization"/>
</dbReference>
<dbReference type="Reactome" id="R-CEL-8948751">
    <property type="pathway name" value="Regulation of PTEN stability and activity"/>
</dbReference>
<dbReference type="Reactome" id="R-CEL-8951664">
    <property type="pathway name" value="Neddylation"/>
</dbReference>
<dbReference type="Reactome" id="R-CEL-901032">
    <property type="pathway name" value="ER Quality Control Compartment (ERQC)"/>
</dbReference>
<dbReference type="Reactome" id="R-CEL-9020702">
    <property type="pathway name" value="Interleukin-1 signaling"/>
</dbReference>
<dbReference type="Reactome" id="R-CEL-9033241">
    <property type="pathway name" value="Peroxisomal protein import"/>
</dbReference>
<dbReference type="Reactome" id="R-CEL-912631">
    <property type="pathway name" value="Regulation of signaling by CBL"/>
</dbReference>
<dbReference type="Reactome" id="R-CEL-917729">
    <property type="pathway name" value="Endosomal Sorting Complex Required For Transport (ESCRT)"/>
</dbReference>
<dbReference type="Reactome" id="R-CEL-917937">
    <property type="pathway name" value="Iron uptake and transport"/>
</dbReference>
<dbReference type="Reactome" id="R-CEL-936440">
    <property type="pathway name" value="Negative regulators of DDX58/IFIH1 signaling"/>
</dbReference>
<dbReference type="Reactome" id="R-CEL-9646399">
    <property type="pathway name" value="Aggrephagy"/>
</dbReference>
<dbReference type="Reactome" id="R-CEL-9648002">
    <property type="pathway name" value="RAS processing"/>
</dbReference>
<dbReference type="Reactome" id="R-CEL-9755511">
    <property type="pathway name" value="KEAP1-NFE2L2 pathway"/>
</dbReference>
<dbReference type="Reactome" id="R-CEL-975956">
    <property type="pathway name" value="Nonsense Mediated Decay (NMD) independent of the Exon Junction Complex (EJC)"/>
</dbReference>
<dbReference type="Reactome" id="R-CEL-975957">
    <property type="pathway name" value="Nonsense Mediated Decay (NMD) enhanced by the Exon Junction Complex (EJC)"/>
</dbReference>
<dbReference type="Reactome" id="R-CEL-9762114">
    <property type="pathway name" value="GSK3B and BTRC:CUL1-mediated-degradation of NFE2L2"/>
</dbReference>
<dbReference type="Reactome" id="R-CEL-983168">
    <property type="pathway name" value="Antigen processing: Ubiquitination &amp; Proteasome degradation"/>
</dbReference>
<dbReference type="PRO" id="PR:P37165"/>
<dbReference type="Proteomes" id="UP000001940">
    <property type="component" value="Chromosome III"/>
</dbReference>
<dbReference type="Bgee" id="WBGene00006725">
    <property type="expression patterns" value="Expressed in germ line (C elegans) and 4 other cell types or tissues"/>
</dbReference>
<dbReference type="GO" id="GO:0005737">
    <property type="term" value="C:cytoplasm"/>
    <property type="evidence" value="ECO:0000318"/>
    <property type="project" value="GO_Central"/>
</dbReference>
<dbReference type="GO" id="GO:0005634">
    <property type="term" value="C:nucleus"/>
    <property type="evidence" value="ECO:0000318"/>
    <property type="project" value="GO_Central"/>
</dbReference>
<dbReference type="GO" id="GO:1990904">
    <property type="term" value="C:ribonucleoprotein complex"/>
    <property type="evidence" value="ECO:0007669"/>
    <property type="project" value="UniProtKB-KW"/>
</dbReference>
<dbReference type="GO" id="GO:0005840">
    <property type="term" value="C:ribosome"/>
    <property type="evidence" value="ECO:0007669"/>
    <property type="project" value="UniProtKB-KW"/>
</dbReference>
<dbReference type="GO" id="GO:0031386">
    <property type="term" value="F:protein tag activity"/>
    <property type="evidence" value="ECO:0000318"/>
    <property type="project" value="GO_Central"/>
</dbReference>
<dbReference type="GO" id="GO:0003735">
    <property type="term" value="F:structural constituent of ribosome"/>
    <property type="evidence" value="ECO:0007669"/>
    <property type="project" value="InterPro"/>
</dbReference>
<dbReference type="GO" id="GO:0031625">
    <property type="term" value="F:ubiquitin protein ligase binding"/>
    <property type="evidence" value="ECO:0000318"/>
    <property type="project" value="GO_Central"/>
</dbReference>
<dbReference type="GO" id="GO:0008270">
    <property type="term" value="F:zinc ion binding"/>
    <property type="evidence" value="ECO:0007669"/>
    <property type="project" value="UniProtKB-KW"/>
</dbReference>
<dbReference type="GO" id="GO:0019941">
    <property type="term" value="P:modification-dependent protein catabolic process"/>
    <property type="evidence" value="ECO:0000318"/>
    <property type="project" value="GO_Central"/>
</dbReference>
<dbReference type="GO" id="GO:0016567">
    <property type="term" value="P:protein ubiquitination"/>
    <property type="evidence" value="ECO:0000318"/>
    <property type="project" value="GO_Central"/>
</dbReference>
<dbReference type="GO" id="GO:0006412">
    <property type="term" value="P:translation"/>
    <property type="evidence" value="ECO:0007669"/>
    <property type="project" value="InterPro"/>
</dbReference>
<dbReference type="Gene3D" id="6.20.50.150">
    <property type="match status" value="1"/>
</dbReference>
<dbReference type="Gene3D" id="3.10.20.90">
    <property type="entry name" value="Phosphatidylinositol 3-kinase Catalytic Subunit, Chain A, domain 1"/>
    <property type="match status" value="1"/>
</dbReference>
<dbReference type="InterPro" id="IPR002906">
    <property type="entry name" value="Ribosomal_eS31"/>
</dbReference>
<dbReference type="InterPro" id="IPR038582">
    <property type="entry name" value="Ribosomal_eS31_euk-type_sf"/>
</dbReference>
<dbReference type="InterPro" id="IPR011332">
    <property type="entry name" value="Ribosomal_zn-bd"/>
</dbReference>
<dbReference type="InterPro" id="IPR000626">
    <property type="entry name" value="Ubiquitin-like_dom"/>
</dbReference>
<dbReference type="InterPro" id="IPR029071">
    <property type="entry name" value="Ubiquitin-like_domsf"/>
</dbReference>
<dbReference type="InterPro" id="IPR019954">
    <property type="entry name" value="Ubiquitin_CS"/>
</dbReference>
<dbReference type="InterPro" id="IPR019956">
    <property type="entry name" value="Ubiquitin_dom"/>
</dbReference>
<dbReference type="InterPro" id="IPR050158">
    <property type="entry name" value="Ubiquitin_ubiquitin-like"/>
</dbReference>
<dbReference type="PANTHER" id="PTHR10666">
    <property type="entry name" value="UBIQUITIN"/>
    <property type="match status" value="1"/>
</dbReference>
<dbReference type="Pfam" id="PF01599">
    <property type="entry name" value="Ribosomal_S27"/>
    <property type="match status" value="1"/>
</dbReference>
<dbReference type="Pfam" id="PF00240">
    <property type="entry name" value="ubiquitin"/>
    <property type="match status" value="1"/>
</dbReference>
<dbReference type="PRINTS" id="PR00348">
    <property type="entry name" value="UBIQUITIN"/>
</dbReference>
<dbReference type="SMART" id="SM01402">
    <property type="entry name" value="Ribosomal_S27"/>
    <property type="match status" value="1"/>
</dbReference>
<dbReference type="SMART" id="SM00213">
    <property type="entry name" value="UBQ"/>
    <property type="match status" value="1"/>
</dbReference>
<dbReference type="SUPFAM" id="SSF54236">
    <property type="entry name" value="Ubiquitin-like"/>
    <property type="match status" value="1"/>
</dbReference>
<dbReference type="SUPFAM" id="SSF57829">
    <property type="entry name" value="Zn-binding ribosomal proteins"/>
    <property type="match status" value="1"/>
</dbReference>
<dbReference type="PROSITE" id="PS00299">
    <property type="entry name" value="UBIQUITIN_1"/>
    <property type="match status" value="1"/>
</dbReference>
<dbReference type="PROSITE" id="PS50053">
    <property type="entry name" value="UBIQUITIN_2"/>
    <property type="match status" value="1"/>
</dbReference>
<comment type="alternative products">
    <event type="alternative splicing"/>
    <isoform>
        <id>P37165-1</id>
        <name>a</name>
        <sequence type="displayed"/>
    </isoform>
    <isoform>
        <id>P37165-2</id>
        <name>b</name>
        <sequence type="described" ref="VSP_038215 VSP_038216"/>
    </isoform>
</comment>
<comment type="similarity">
    <text evidence="2">In the N-terminal section; belongs to the ubiquitin family.</text>
</comment>
<comment type="similarity">
    <text evidence="2">In the C-terminal section; belongs to the eukaryotic ribosomal protein eS31 family.</text>
</comment>
<feature type="chain" id="PRO_0000114887" description="Ubiquitin-like protein 1">
    <location>
        <begin position="1"/>
        <end position="70"/>
    </location>
</feature>
<feature type="chain" id="PRO_0000137668" description="Small ribosomal subunit protein eS31">
    <location>
        <begin position="71"/>
        <end position="163"/>
    </location>
</feature>
<feature type="domain" description="Ubiquitin-like" evidence="1">
    <location>
        <begin position="1"/>
        <end position="70"/>
    </location>
</feature>
<feature type="zinc finger region" description="C4-type">
    <location>
        <begin position="115"/>
        <end position="138"/>
    </location>
</feature>
<feature type="cross-link" description="Glycyl lysine isopeptide (Gly-Lys) (interchain with K-? in acceptor proteins)">
    <location>
        <position position="70"/>
    </location>
</feature>
<feature type="splice variant" id="VSP_038215" description="In isoform b." evidence="2">
    <original>GRQ</original>
    <variation>ARG</variation>
    <location>
        <begin position="45"/>
        <end position="47"/>
    </location>
</feature>
<feature type="splice variant" id="VSP_038216" description="In isoform b." evidence="2">
    <location>
        <begin position="48"/>
        <end position="163"/>
    </location>
</feature>